<evidence type="ECO:0000250" key="1">
    <source>
        <dbReference type="UniProtKB" id="Q5T3I0"/>
    </source>
</evidence>
<evidence type="ECO:0000255" key="2">
    <source>
        <dbReference type="PROSITE-ProRule" id="PRU00092"/>
    </source>
</evidence>
<evidence type="ECO:0000256" key="3">
    <source>
        <dbReference type="SAM" id="MobiDB-lite"/>
    </source>
</evidence>
<evidence type="ECO:0000303" key="4">
    <source>
    </source>
</evidence>
<evidence type="ECO:0000305" key="5"/>
<evidence type="ECO:0007744" key="6">
    <source>
    </source>
</evidence>
<evidence type="ECO:0007744" key="7">
    <source>
    </source>
</evidence>
<organism>
    <name type="scientific">Mus musculus</name>
    <name type="common">Mouse</name>
    <dbReference type="NCBI Taxonomy" id="10090"/>
    <lineage>
        <taxon>Eukaryota</taxon>
        <taxon>Metazoa</taxon>
        <taxon>Chordata</taxon>
        <taxon>Craniata</taxon>
        <taxon>Vertebrata</taxon>
        <taxon>Euteleostomi</taxon>
        <taxon>Mammalia</taxon>
        <taxon>Eutheria</taxon>
        <taxon>Euarchontoglires</taxon>
        <taxon>Glires</taxon>
        <taxon>Rodentia</taxon>
        <taxon>Myomorpha</taxon>
        <taxon>Muroidea</taxon>
        <taxon>Muridae</taxon>
        <taxon>Murinae</taxon>
        <taxon>Mus</taxon>
        <taxon>Mus</taxon>
    </lineage>
</organism>
<gene>
    <name type="primary">Gpatch4</name>
    <name type="synonym">Gpatc4</name>
</gene>
<dbReference type="EMBL" id="AK018306">
    <property type="protein sequence ID" value="BAB31153.1"/>
    <property type="molecule type" value="mRNA"/>
</dbReference>
<dbReference type="EMBL" id="AK017310">
    <property type="protein sequence ID" value="BAB30685.1"/>
    <property type="status" value="ALT_FRAME"/>
    <property type="molecule type" value="mRNA"/>
</dbReference>
<dbReference type="EMBL" id="AK169111">
    <property type="protein sequence ID" value="BAE40893.1"/>
    <property type="molecule type" value="mRNA"/>
</dbReference>
<dbReference type="EMBL" id="BC019490">
    <property type="protein sequence ID" value="AAH19490.1"/>
    <property type="molecule type" value="mRNA"/>
</dbReference>
<dbReference type="CCDS" id="CCDS50948.1">
    <molecule id="Q3TFK5-1"/>
</dbReference>
<dbReference type="RefSeq" id="NP_001104279.1">
    <molecule id="Q3TFK5-1"/>
    <property type="nucleotide sequence ID" value="NM_001110809.2"/>
</dbReference>
<dbReference type="RefSeq" id="NP_001273786.1">
    <molecule id="Q3TFK5-1"/>
    <property type="nucleotide sequence ID" value="NM_001286857.1"/>
</dbReference>
<dbReference type="RefSeq" id="NP_079939.3">
    <molecule id="Q3TFK5-1"/>
    <property type="nucleotide sequence ID" value="NM_025663.4"/>
</dbReference>
<dbReference type="BioGRID" id="211596">
    <property type="interactions" value="2"/>
</dbReference>
<dbReference type="FunCoup" id="Q3TFK5">
    <property type="interactions" value="439"/>
</dbReference>
<dbReference type="IntAct" id="Q3TFK5">
    <property type="interactions" value="1"/>
</dbReference>
<dbReference type="STRING" id="10090.ENSMUSP00000141786"/>
<dbReference type="iPTMnet" id="Q3TFK5"/>
<dbReference type="PhosphoSitePlus" id="Q3TFK5"/>
<dbReference type="jPOST" id="Q3TFK5"/>
<dbReference type="PaxDb" id="10090-ENSMUSP00000132699"/>
<dbReference type="PeptideAtlas" id="Q3TFK5"/>
<dbReference type="ProteomicsDB" id="269624">
    <molecule id="Q3TFK5-1"/>
</dbReference>
<dbReference type="ProteomicsDB" id="269625">
    <molecule id="Q3TFK5-2"/>
</dbReference>
<dbReference type="Pumba" id="Q3TFK5"/>
<dbReference type="Antibodypedia" id="35319">
    <property type="antibodies" value="108 antibodies from 14 providers"/>
</dbReference>
<dbReference type="Ensembl" id="ENSMUST00000029707.13">
    <molecule id="Q3TFK5-1"/>
    <property type="protein sequence ID" value="ENSMUSP00000029707.8"/>
    <property type="gene ID" value="ENSMUSG00000028069.17"/>
</dbReference>
<dbReference type="Ensembl" id="ENSMUST00000166021.8">
    <molecule id="Q3TFK5-1"/>
    <property type="protein sequence ID" value="ENSMUSP00000132699.2"/>
    <property type="gene ID" value="ENSMUSG00000028069.17"/>
</dbReference>
<dbReference type="Ensembl" id="ENSMUST00000193398.2">
    <molecule id="Q3TFK5-1"/>
    <property type="protein sequence ID" value="ENSMUSP00000141786.2"/>
    <property type="gene ID" value="ENSMUSG00000028069.17"/>
</dbReference>
<dbReference type="GeneID" id="66614"/>
<dbReference type="KEGG" id="mmu:66614"/>
<dbReference type="UCSC" id="uc008pts.3">
    <molecule id="Q3TFK5-1"/>
    <property type="organism name" value="mouse"/>
</dbReference>
<dbReference type="AGR" id="MGI:1913864"/>
<dbReference type="CTD" id="54865"/>
<dbReference type="MGI" id="MGI:1913864">
    <property type="gene designation" value="Gpatch4"/>
</dbReference>
<dbReference type="VEuPathDB" id="HostDB:ENSMUSG00000028069"/>
<dbReference type="eggNOG" id="KOG2809">
    <property type="taxonomic scope" value="Eukaryota"/>
</dbReference>
<dbReference type="GeneTree" id="ENSGT00390000008765"/>
<dbReference type="HOGENOM" id="CLU_674312_0_0_1"/>
<dbReference type="InParanoid" id="Q3TFK5"/>
<dbReference type="OMA" id="ILGKYGW"/>
<dbReference type="OrthoDB" id="10019757at2759"/>
<dbReference type="PhylomeDB" id="Q3TFK5"/>
<dbReference type="TreeFam" id="TF326721"/>
<dbReference type="BioGRID-ORCS" id="66614">
    <property type="hits" value="6 hits in 78 CRISPR screens"/>
</dbReference>
<dbReference type="ChiTaRS" id="Gpatch4">
    <property type="organism name" value="mouse"/>
</dbReference>
<dbReference type="PRO" id="PR:Q3TFK5"/>
<dbReference type="Proteomes" id="UP000000589">
    <property type="component" value="Chromosome 3"/>
</dbReference>
<dbReference type="RNAct" id="Q3TFK5">
    <property type="molecule type" value="protein"/>
</dbReference>
<dbReference type="Bgee" id="ENSMUSG00000028069">
    <property type="expression patterns" value="Expressed in ear vesicle and 252 other cell types or tissues"/>
</dbReference>
<dbReference type="ExpressionAtlas" id="Q3TFK5">
    <property type="expression patterns" value="baseline and differential"/>
</dbReference>
<dbReference type="GO" id="GO:0005730">
    <property type="term" value="C:nucleolus"/>
    <property type="evidence" value="ECO:0007669"/>
    <property type="project" value="Ensembl"/>
</dbReference>
<dbReference type="GO" id="GO:0005654">
    <property type="term" value="C:nucleoplasm"/>
    <property type="evidence" value="ECO:0007669"/>
    <property type="project" value="Ensembl"/>
</dbReference>
<dbReference type="GO" id="GO:0003676">
    <property type="term" value="F:nucleic acid binding"/>
    <property type="evidence" value="ECO:0007669"/>
    <property type="project" value="InterPro"/>
</dbReference>
<dbReference type="GO" id="GO:0002244">
    <property type="term" value="P:hematopoietic progenitor cell differentiation"/>
    <property type="evidence" value="ECO:0000316"/>
    <property type="project" value="MGI"/>
</dbReference>
<dbReference type="InterPro" id="IPR000467">
    <property type="entry name" value="G_patch_dom"/>
</dbReference>
<dbReference type="InterPro" id="IPR050656">
    <property type="entry name" value="PINX1"/>
</dbReference>
<dbReference type="PANTHER" id="PTHR23149">
    <property type="entry name" value="G PATCH DOMAIN CONTAINING PROTEIN"/>
    <property type="match status" value="1"/>
</dbReference>
<dbReference type="PANTHER" id="PTHR23149:SF9">
    <property type="entry name" value="G PATCH DOMAIN-CONTAINING PROTEIN 4"/>
    <property type="match status" value="1"/>
</dbReference>
<dbReference type="Pfam" id="PF01585">
    <property type="entry name" value="G-patch"/>
    <property type="match status" value="1"/>
</dbReference>
<dbReference type="SMART" id="SM00443">
    <property type="entry name" value="G_patch"/>
    <property type="match status" value="1"/>
</dbReference>
<dbReference type="PROSITE" id="PS50174">
    <property type="entry name" value="G_PATCH"/>
    <property type="match status" value="1"/>
</dbReference>
<name>GPTC4_MOUSE</name>
<comment type="alternative products">
    <event type="alternative splicing"/>
    <isoform>
        <id>Q3TFK5-1</id>
        <name>1</name>
        <sequence type="displayed"/>
    </isoform>
    <isoform>
        <id>Q3TFK5-2</id>
        <name>2</name>
        <sequence type="described" ref="VSP_025482"/>
    </isoform>
</comment>
<comment type="sequence caution" evidence="5">
    <conflict type="frameshift">
        <sequence resource="EMBL-CDS" id="BAB30685"/>
    </conflict>
</comment>
<feature type="chain" id="PRO_0000287463" description="G patch domain-containing protein 4">
    <location>
        <begin position="1"/>
        <end position="415"/>
    </location>
</feature>
<feature type="domain" description="G-patch" evidence="2">
    <location>
        <begin position="11"/>
        <end position="57"/>
    </location>
</feature>
<feature type="region of interest" description="Disordered" evidence="3">
    <location>
        <begin position="116"/>
        <end position="141"/>
    </location>
</feature>
<feature type="region of interest" description="Disordered" evidence="3">
    <location>
        <begin position="191"/>
        <end position="415"/>
    </location>
</feature>
<feature type="compositionally biased region" description="Basic and acidic residues" evidence="3">
    <location>
        <begin position="118"/>
        <end position="141"/>
    </location>
</feature>
<feature type="compositionally biased region" description="Polar residues" evidence="3">
    <location>
        <begin position="191"/>
        <end position="201"/>
    </location>
</feature>
<feature type="compositionally biased region" description="Basic and acidic residues" evidence="3">
    <location>
        <begin position="224"/>
        <end position="239"/>
    </location>
</feature>
<feature type="compositionally biased region" description="Acidic residues" evidence="3">
    <location>
        <begin position="335"/>
        <end position="345"/>
    </location>
</feature>
<feature type="compositionally biased region" description="Basic residues" evidence="3">
    <location>
        <begin position="353"/>
        <end position="364"/>
    </location>
</feature>
<feature type="compositionally biased region" description="Basic and acidic residues" evidence="3">
    <location>
        <begin position="387"/>
        <end position="397"/>
    </location>
</feature>
<feature type="compositionally biased region" description="Basic residues" evidence="3">
    <location>
        <begin position="398"/>
        <end position="407"/>
    </location>
</feature>
<feature type="modified residue" description="N-acetylmethionine" evidence="1">
    <location>
        <position position="1"/>
    </location>
</feature>
<feature type="modified residue" description="Phosphothreonine" evidence="1">
    <location>
        <position position="4"/>
    </location>
</feature>
<feature type="modified residue" description="Phosphothreonine" evidence="1">
    <location>
        <position position="116"/>
    </location>
</feature>
<feature type="modified residue" description="Phosphoserine" evidence="6">
    <location>
        <position position="130"/>
    </location>
</feature>
<feature type="modified residue" description="Phosphoserine" evidence="6 7">
    <location>
        <position position="258"/>
    </location>
</feature>
<feature type="cross-link" description="Glycyl lysine isopeptide (Lys-Gly) (interchain with G-Cter in SUMO2)" evidence="1">
    <location>
        <position position="46"/>
    </location>
</feature>
<feature type="splice variant" id="VSP_025482" description="In isoform 2." evidence="4">
    <location>
        <begin position="240"/>
        <end position="326"/>
    </location>
</feature>
<feature type="sequence conflict" description="In Ref. 1; BAB30685." evidence="5" ref="1">
    <original>L</original>
    <variation>R</variation>
    <location>
        <position position="174"/>
    </location>
</feature>
<feature type="sequence conflict" description="In Ref. 2; AAH19490." evidence="5" ref="2">
    <original>Q</original>
    <variation>R</variation>
    <location>
        <position position="184"/>
    </location>
</feature>
<feature type="sequence conflict" description="In Ref. 1; BAB31153." evidence="5" ref="1">
    <original>S</original>
    <variation>N</variation>
    <location>
        <position position="317"/>
    </location>
</feature>
<protein>
    <recommendedName>
        <fullName>G patch domain-containing protein 4</fullName>
    </recommendedName>
</protein>
<proteinExistence type="evidence at protein level"/>
<sequence length="415" mass="46554">MSVTPEVKSRGMKFAEEQLLKHGWTQGKGLGRRENGITQALKVTLKQDNHGVGHDPAKEFTDHWWSDLFNKTAASLVVDSGKDGVQIRRLSKETTQRSHPKPSLLYQKFVKTATLTSGEEKPDRDLGNCSDVDNHEPTPPKILTDEMLLKACEGRTAHKAARIGITMKAKLARLEAQEQAFLAQLKGSKALGTSQPLTDSEPSQKKKKKRKQKEGEEAATTEKSLGDELLGHTDRSFRDSRKKKKRQKAERQGTAIGSEEEEAAGESGPRELSTEQSDQPSRKKKKRRKQRHEEDGEMGVCDEGGRDVTSRPKAVNSGGDKDPRRSSKKRGTCGEDLDTQEEEGKDDLTKGERKVRRKDKRKRQQCCEEDLDVSSKDDGGTWVAEDAGERSRQYPKERAKKKKRKRDRGSEVDLS</sequence>
<keyword id="KW-0007">Acetylation</keyword>
<keyword id="KW-0025">Alternative splicing</keyword>
<keyword id="KW-1017">Isopeptide bond</keyword>
<keyword id="KW-0597">Phosphoprotein</keyword>
<keyword id="KW-1185">Reference proteome</keyword>
<keyword id="KW-0832">Ubl conjugation</keyword>
<accession>Q3TFK5</accession>
<accession>Q8VCN2</accession>
<accession>Q9CU32</accession>
<accession>Q9D3L4</accession>
<reference key="1">
    <citation type="journal article" date="2005" name="Science">
        <title>The transcriptional landscape of the mammalian genome.</title>
        <authorList>
            <person name="Carninci P."/>
            <person name="Kasukawa T."/>
            <person name="Katayama S."/>
            <person name="Gough J."/>
            <person name="Frith M.C."/>
            <person name="Maeda N."/>
            <person name="Oyama R."/>
            <person name="Ravasi T."/>
            <person name="Lenhard B."/>
            <person name="Wells C."/>
            <person name="Kodzius R."/>
            <person name="Shimokawa K."/>
            <person name="Bajic V.B."/>
            <person name="Brenner S.E."/>
            <person name="Batalov S."/>
            <person name="Forrest A.R."/>
            <person name="Zavolan M."/>
            <person name="Davis M.J."/>
            <person name="Wilming L.G."/>
            <person name="Aidinis V."/>
            <person name="Allen J.E."/>
            <person name="Ambesi-Impiombato A."/>
            <person name="Apweiler R."/>
            <person name="Aturaliya R.N."/>
            <person name="Bailey T.L."/>
            <person name="Bansal M."/>
            <person name="Baxter L."/>
            <person name="Beisel K.W."/>
            <person name="Bersano T."/>
            <person name="Bono H."/>
            <person name="Chalk A.M."/>
            <person name="Chiu K.P."/>
            <person name="Choudhary V."/>
            <person name="Christoffels A."/>
            <person name="Clutterbuck D.R."/>
            <person name="Crowe M.L."/>
            <person name="Dalla E."/>
            <person name="Dalrymple B.P."/>
            <person name="de Bono B."/>
            <person name="Della Gatta G."/>
            <person name="di Bernardo D."/>
            <person name="Down T."/>
            <person name="Engstrom P."/>
            <person name="Fagiolini M."/>
            <person name="Faulkner G."/>
            <person name="Fletcher C.F."/>
            <person name="Fukushima T."/>
            <person name="Furuno M."/>
            <person name="Futaki S."/>
            <person name="Gariboldi M."/>
            <person name="Georgii-Hemming P."/>
            <person name="Gingeras T.R."/>
            <person name="Gojobori T."/>
            <person name="Green R.E."/>
            <person name="Gustincich S."/>
            <person name="Harbers M."/>
            <person name="Hayashi Y."/>
            <person name="Hensch T.K."/>
            <person name="Hirokawa N."/>
            <person name="Hill D."/>
            <person name="Huminiecki L."/>
            <person name="Iacono M."/>
            <person name="Ikeo K."/>
            <person name="Iwama A."/>
            <person name="Ishikawa T."/>
            <person name="Jakt M."/>
            <person name="Kanapin A."/>
            <person name="Katoh M."/>
            <person name="Kawasawa Y."/>
            <person name="Kelso J."/>
            <person name="Kitamura H."/>
            <person name="Kitano H."/>
            <person name="Kollias G."/>
            <person name="Krishnan S.P."/>
            <person name="Kruger A."/>
            <person name="Kummerfeld S.K."/>
            <person name="Kurochkin I.V."/>
            <person name="Lareau L.F."/>
            <person name="Lazarevic D."/>
            <person name="Lipovich L."/>
            <person name="Liu J."/>
            <person name="Liuni S."/>
            <person name="McWilliam S."/>
            <person name="Madan Babu M."/>
            <person name="Madera M."/>
            <person name="Marchionni L."/>
            <person name="Matsuda H."/>
            <person name="Matsuzawa S."/>
            <person name="Miki H."/>
            <person name="Mignone F."/>
            <person name="Miyake S."/>
            <person name="Morris K."/>
            <person name="Mottagui-Tabar S."/>
            <person name="Mulder N."/>
            <person name="Nakano N."/>
            <person name="Nakauchi H."/>
            <person name="Ng P."/>
            <person name="Nilsson R."/>
            <person name="Nishiguchi S."/>
            <person name="Nishikawa S."/>
            <person name="Nori F."/>
            <person name="Ohara O."/>
            <person name="Okazaki Y."/>
            <person name="Orlando V."/>
            <person name="Pang K.C."/>
            <person name="Pavan W.J."/>
            <person name="Pavesi G."/>
            <person name="Pesole G."/>
            <person name="Petrovsky N."/>
            <person name="Piazza S."/>
            <person name="Reed J."/>
            <person name="Reid J.F."/>
            <person name="Ring B.Z."/>
            <person name="Ringwald M."/>
            <person name="Rost B."/>
            <person name="Ruan Y."/>
            <person name="Salzberg S.L."/>
            <person name="Sandelin A."/>
            <person name="Schneider C."/>
            <person name="Schoenbach C."/>
            <person name="Sekiguchi K."/>
            <person name="Semple C.A."/>
            <person name="Seno S."/>
            <person name="Sessa L."/>
            <person name="Sheng Y."/>
            <person name="Shibata Y."/>
            <person name="Shimada H."/>
            <person name="Shimada K."/>
            <person name="Silva D."/>
            <person name="Sinclair B."/>
            <person name="Sperling S."/>
            <person name="Stupka E."/>
            <person name="Sugiura K."/>
            <person name="Sultana R."/>
            <person name="Takenaka Y."/>
            <person name="Taki K."/>
            <person name="Tammoja K."/>
            <person name="Tan S.L."/>
            <person name="Tang S."/>
            <person name="Taylor M.S."/>
            <person name="Tegner J."/>
            <person name="Teichmann S.A."/>
            <person name="Ueda H.R."/>
            <person name="van Nimwegen E."/>
            <person name="Verardo R."/>
            <person name="Wei C.L."/>
            <person name="Yagi K."/>
            <person name="Yamanishi H."/>
            <person name="Zabarovsky E."/>
            <person name="Zhu S."/>
            <person name="Zimmer A."/>
            <person name="Hide W."/>
            <person name="Bult C."/>
            <person name="Grimmond S.M."/>
            <person name="Teasdale R.D."/>
            <person name="Liu E.T."/>
            <person name="Brusic V."/>
            <person name="Quackenbush J."/>
            <person name="Wahlestedt C."/>
            <person name="Mattick J.S."/>
            <person name="Hume D.A."/>
            <person name="Kai C."/>
            <person name="Sasaki D."/>
            <person name="Tomaru Y."/>
            <person name="Fukuda S."/>
            <person name="Kanamori-Katayama M."/>
            <person name="Suzuki M."/>
            <person name="Aoki J."/>
            <person name="Arakawa T."/>
            <person name="Iida J."/>
            <person name="Imamura K."/>
            <person name="Itoh M."/>
            <person name="Kato T."/>
            <person name="Kawaji H."/>
            <person name="Kawagashira N."/>
            <person name="Kawashima T."/>
            <person name="Kojima M."/>
            <person name="Kondo S."/>
            <person name="Konno H."/>
            <person name="Nakano K."/>
            <person name="Ninomiya N."/>
            <person name="Nishio T."/>
            <person name="Okada M."/>
            <person name="Plessy C."/>
            <person name="Shibata K."/>
            <person name="Shiraki T."/>
            <person name="Suzuki S."/>
            <person name="Tagami M."/>
            <person name="Waki K."/>
            <person name="Watahiki A."/>
            <person name="Okamura-Oho Y."/>
            <person name="Suzuki H."/>
            <person name="Kawai J."/>
            <person name="Hayashizaki Y."/>
        </authorList>
    </citation>
    <scope>NUCLEOTIDE SEQUENCE [LARGE SCALE MRNA] (ISOFORM 1)</scope>
    <source>
        <strain>C57BL/6J</strain>
        <tissue>Cerebellum</tissue>
        <tissue>Kidney</tissue>
    </source>
</reference>
<reference key="2">
    <citation type="journal article" date="2004" name="Genome Res.">
        <title>The status, quality, and expansion of the NIH full-length cDNA project: the Mammalian Gene Collection (MGC).</title>
        <authorList>
            <consortium name="The MGC Project Team"/>
        </authorList>
    </citation>
    <scope>NUCLEOTIDE SEQUENCE [LARGE SCALE MRNA] (ISOFORM 2)</scope>
    <source>
        <strain>FVB/N</strain>
        <tissue>Mammary tumor</tissue>
    </source>
</reference>
<reference key="3">
    <citation type="journal article" date="2007" name="Proc. Natl. Acad. Sci. U.S.A.">
        <title>Large-scale phosphorylation analysis of mouse liver.</title>
        <authorList>
            <person name="Villen J."/>
            <person name="Beausoleil S.A."/>
            <person name="Gerber S.A."/>
            <person name="Gygi S.P."/>
        </authorList>
    </citation>
    <scope>PHOSPHORYLATION [LARGE SCALE ANALYSIS] AT SER-130 AND SER-258</scope>
    <scope>IDENTIFICATION BY MASS SPECTROMETRY [LARGE SCALE ANALYSIS]</scope>
    <source>
        <tissue>Liver</tissue>
    </source>
</reference>
<reference key="4">
    <citation type="journal article" date="2010" name="Cell">
        <title>A tissue-specific atlas of mouse protein phosphorylation and expression.</title>
        <authorList>
            <person name="Huttlin E.L."/>
            <person name="Jedrychowski M.P."/>
            <person name="Elias J.E."/>
            <person name="Goswami T."/>
            <person name="Rad R."/>
            <person name="Beausoleil S.A."/>
            <person name="Villen J."/>
            <person name="Haas W."/>
            <person name="Sowa M.E."/>
            <person name="Gygi S.P."/>
        </authorList>
    </citation>
    <scope>PHOSPHORYLATION [LARGE SCALE ANALYSIS] AT SER-258</scope>
    <scope>IDENTIFICATION BY MASS SPECTROMETRY [LARGE SCALE ANALYSIS]</scope>
    <source>
        <tissue>Lung</tissue>
        <tissue>Pancreas</tissue>
        <tissue>Spleen</tissue>
        <tissue>Testis</tissue>
    </source>
</reference>